<sequence>SLWEWGQMILKETGKNPFPYYGAYGCYCGWGGRRKPKDATDRCCFVHDCCRYKKLTGCPKTNDRYSYSRLDYTIVCGEDDPCKEICECDKAAAVCFRENLRTYNKKYMAHLRVLCKKDKPC</sequence>
<evidence type="ECO:0000250" key="1"/>
<evidence type="ECO:0000250" key="2">
    <source>
        <dbReference type="UniProtKB" id="P59071"/>
    </source>
</evidence>
<evidence type="ECO:0000269" key="3">
    <source>
    </source>
</evidence>
<evidence type="ECO:0000303" key="4">
    <source>
    </source>
</evidence>
<evidence type="ECO:0000305" key="5"/>
<evidence type="ECO:0000305" key="6">
    <source>
    </source>
</evidence>
<accession>P0DQQ0</accession>
<accession>P0DTS7</accession>
<comment type="function">
    <text evidence="3">Snake venom phospholipase A2 (PLA2) that exhibits myotoxin and anticoagulant activity (PubMed:19539640). Displays edema-inducing activities in mouse paw (PubMed:19539640). Also displays cytotoxic activity against some cell lines and myotubes, and antimicrobial activities against E.coli, C.albicans and Leishmania (PubMed:19539640). PLA2 catalyzes the calcium-dependent hydrolysis of the 2-acyl groups in 3-sn-phosphoglycerides.</text>
</comment>
<comment type="catalytic activity">
    <reaction evidence="3">
        <text>a 1,2-diacyl-sn-glycero-3-phosphocholine + H2O = a 1-acyl-sn-glycero-3-phosphocholine + a fatty acid + H(+)</text>
        <dbReference type="Rhea" id="RHEA:15801"/>
        <dbReference type="ChEBI" id="CHEBI:15377"/>
        <dbReference type="ChEBI" id="CHEBI:15378"/>
        <dbReference type="ChEBI" id="CHEBI:28868"/>
        <dbReference type="ChEBI" id="CHEBI:57643"/>
        <dbReference type="ChEBI" id="CHEBI:58168"/>
        <dbReference type="EC" id="3.1.1.4"/>
    </reaction>
</comment>
<comment type="cofactor">
    <cofactor evidence="3">
        <name>Ca(2+)</name>
        <dbReference type="ChEBI" id="CHEBI:29108"/>
    </cofactor>
    <text evidence="1">Binds 1 Ca(2+) ion.</text>
</comment>
<comment type="biophysicochemical properties">
    <phDependence>
        <text evidence="3">Optimum pH is 8.0.</text>
    </phDependence>
    <temperatureDependence>
        <text evidence="3">Optimum temperature is 35-45 degrees Celsius.</text>
    </temperatureDependence>
</comment>
<comment type="subunit">
    <text evidence="3">Homodimer; non-covalently linked.</text>
</comment>
<comment type="subcellular location">
    <subcellularLocation>
        <location evidence="3">Secreted</location>
    </subcellularLocation>
</comment>
<comment type="tissue specificity">
    <text evidence="6">Expressed by the venom gland.</text>
</comment>
<comment type="similarity">
    <text evidence="5">Belongs to the phospholipase A2 family. Group II subfamily. D49 sub-subfamily.</text>
</comment>
<organism>
    <name type="scientific">Bothrops brazili</name>
    <name type="common">Brazil's lancehead</name>
    <dbReference type="NCBI Taxonomy" id="157546"/>
    <lineage>
        <taxon>Eukaryota</taxon>
        <taxon>Metazoa</taxon>
        <taxon>Chordata</taxon>
        <taxon>Craniata</taxon>
        <taxon>Vertebrata</taxon>
        <taxon>Euteleostomi</taxon>
        <taxon>Lepidosauria</taxon>
        <taxon>Squamata</taxon>
        <taxon>Bifurcata</taxon>
        <taxon>Unidentata</taxon>
        <taxon>Episquamata</taxon>
        <taxon>Toxicofera</taxon>
        <taxon>Serpentes</taxon>
        <taxon>Colubroidea</taxon>
        <taxon>Viperidae</taxon>
        <taxon>Crotalinae</taxon>
        <taxon>Bothrops</taxon>
    </lineage>
</organism>
<protein>
    <recommendedName>
        <fullName evidence="4">Basic phospholipase A2 BbTX-III</fullName>
        <shortName>svPLA2</shortName>
        <ecNumber evidence="3">3.1.1.4</ecNumber>
    </recommendedName>
    <alternativeName>
        <fullName evidence="4">Brazilitoxin III</fullName>
        <shortName evidence="4">BbTX-III</shortName>
    </alternativeName>
    <alternativeName>
        <fullName>Phosphatidylcholine 2-acylhydrolase</fullName>
    </alternativeName>
</protein>
<proteinExistence type="evidence at protein level"/>
<name>PA2B3_BOTBZ</name>
<feature type="chain" id="PRO_0000453020" description="Basic phospholipase A2 BbTX-III" evidence="3">
    <location>
        <begin position="1"/>
        <end position="121"/>
    </location>
</feature>
<feature type="active site" evidence="2">
    <location>
        <position position="47"/>
    </location>
</feature>
<feature type="active site" evidence="2">
    <location>
        <position position="89"/>
    </location>
</feature>
<feature type="binding site" evidence="2">
    <location>
        <position position="27"/>
    </location>
    <ligand>
        <name>Ca(2+)</name>
        <dbReference type="ChEBI" id="CHEBI:29108"/>
    </ligand>
</feature>
<feature type="binding site" evidence="2">
    <location>
        <position position="29"/>
    </location>
    <ligand>
        <name>Ca(2+)</name>
        <dbReference type="ChEBI" id="CHEBI:29108"/>
    </ligand>
</feature>
<feature type="binding site" evidence="2">
    <location>
        <position position="31"/>
    </location>
    <ligand>
        <name>Ca(2+)</name>
        <dbReference type="ChEBI" id="CHEBI:29108"/>
    </ligand>
</feature>
<feature type="binding site" evidence="2">
    <location>
        <position position="48"/>
    </location>
    <ligand>
        <name>Ca(2+)</name>
        <dbReference type="ChEBI" id="CHEBI:29108"/>
    </ligand>
</feature>
<feature type="disulfide bond" evidence="2">
    <location>
        <begin position="28"/>
        <end position="44"/>
    </location>
</feature>
<feature type="disulfide bond" evidence="2">
    <location>
        <begin position="43"/>
        <end position="95"/>
    </location>
</feature>
<feature type="disulfide bond" evidence="2">
    <location>
        <begin position="49"/>
        <end position="121"/>
    </location>
</feature>
<feature type="disulfide bond" evidence="2">
    <location>
        <begin position="50"/>
        <end position="88"/>
    </location>
</feature>
<feature type="disulfide bond" evidence="2">
    <location>
        <begin position="58"/>
        <end position="82"/>
    </location>
</feature>
<feature type="disulfide bond" evidence="2">
    <location>
        <begin position="76"/>
        <end position="86"/>
    </location>
</feature>
<reference key="1">
    <citation type="journal article" date="2009" name="Toxicon">
        <title>Structural and functional characterization of brazilitoxins II and III (BbTX-II and -III), two myotoxins from the venom of Bothrops brazili snake.</title>
        <authorList>
            <person name="Huancahuire-Vega S."/>
            <person name="Ponce-Soto L.A."/>
            <person name="Martins-de-Souza D."/>
            <person name="Marangoni S."/>
        </authorList>
    </citation>
    <scope>PROTEIN SEQUENCE</scope>
    <scope>FUNCTION</scope>
    <scope>CATALYTIC ACTIVITY</scope>
    <scope>COFACTOR</scope>
    <scope>SUBCELLULAR LOCATION</scope>
    <scope>BIOPHYSICOCHEMICAL PROPERTIES</scope>
    <scope>SUBUNIT</scope>
    <source>
        <tissue>Venom</tissue>
    </source>
</reference>
<keyword id="KW-0044">Antibiotic</keyword>
<keyword id="KW-0929">Antimicrobial</keyword>
<keyword id="KW-1203">Blood coagulation cascade inhibiting toxin</keyword>
<keyword id="KW-0106">Calcium</keyword>
<keyword id="KW-0903">Direct protein sequencing</keyword>
<keyword id="KW-1015">Disulfide bond</keyword>
<keyword id="KW-1199">Hemostasis impairing toxin</keyword>
<keyword id="KW-0378">Hydrolase</keyword>
<keyword id="KW-0442">Lipid degradation</keyword>
<keyword id="KW-0443">Lipid metabolism</keyword>
<keyword id="KW-0479">Metal-binding</keyword>
<keyword id="KW-0959">Myotoxin</keyword>
<keyword id="KW-0964">Secreted</keyword>
<keyword id="KW-0800">Toxin</keyword>
<dbReference type="EC" id="3.1.1.4" evidence="3"/>
<dbReference type="SMR" id="P0DQQ0"/>
<dbReference type="GO" id="GO:0005576">
    <property type="term" value="C:extracellular region"/>
    <property type="evidence" value="ECO:0007669"/>
    <property type="project" value="UniProtKB-SubCell"/>
</dbReference>
<dbReference type="GO" id="GO:0005509">
    <property type="term" value="F:calcium ion binding"/>
    <property type="evidence" value="ECO:0007669"/>
    <property type="project" value="InterPro"/>
</dbReference>
<dbReference type="GO" id="GO:0047498">
    <property type="term" value="F:calcium-dependent phospholipase A2 activity"/>
    <property type="evidence" value="ECO:0007669"/>
    <property type="project" value="TreeGrafter"/>
</dbReference>
<dbReference type="GO" id="GO:0005543">
    <property type="term" value="F:phospholipid binding"/>
    <property type="evidence" value="ECO:0007669"/>
    <property type="project" value="TreeGrafter"/>
</dbReference>
<dbReference type="GO" id="GO:0090729">
    <property type="term" value="F:toxin activity"/>
    <property type="evidence" value="ECO:0007669"/>
    <property type="project" value="UniProtKB-KW"/>
</dbReference>
<dbReference type="GO" id="GO:0050482">
    <property type="term" value="P:arachidonate secretion"/>
    <property type="evidence" value="ECO:0007669"/>
    <property type="project" value="InterPro"/>
</dbReference>
<dbReference type="GO" id="GO:0042742">
    <property type="term" value="P:defense response to bacterium"/>
    <property type="evidence" value="ECO:0007669"/>
    <property type="project" value="UniProtKB-KW"/>
</dbReference>
<dbReference type="GO" id="GO:0016042">
    <property type="term" value="P:lipid catabolic process"/>
    <property type="evidence" value="ECO:0007669"/>
    <property type="project" value="UniProtKB-KW"/>
</dbReference>
<dbReference type="GO" id="GO:0042130">
    <property type="term" value="P:negative regulation of T cell proliferation"/>
    <property type="evidence" value="ECO:0007669"/>
    <property type="project" value="TreeGrafter"/>
</dbReference>
<dbReference type="GO" id="GO:0006644">
    <property type="term" value="P:phospholipid metabolic process"/>
    <property type="evidence" value="ECO:0007669"/>
    <property type="project" value="InterPro"/>
</dbReference>
<dbReference type="CDD" id="cd00125">
    <property type="entry name" value="PLA2c"/>
    <property type="match status" value="1"/>
</dbReference>
<dbReference type="FunFam" id="1.20.90.10:FF:000001">
    <property type="entry name" value="Basic phospholipase A2 homolog"/>
    <property type="match status" value="1"/>
</dbReference>
<dbReference type="Gene3D" id="1.20.90.10">
    <property type="entry name" value="Phospholipase A2 domain"/>
    <property type="match status" value="1"/>
</dbReference>
<dbReference type="InterPro" id="IPR001211">
    <property type="entry name" value="PLipase_A2"/>
</dbReference>
<dbReference type="InterPro" id="IPR033112">
    <property type="entry name" value="PLipase_A2_Asp_AS"/>
</dbReference>
<dbReference type="InterPro" id="IPR016090">
    <property type="entry name" value="PLipase_A2_dom"/>
</dbReference>
<dbReference type="InterPro" id="IPR036444">
    <property type="entry name" value="PLipase_A2_dom_sf"/>
</dbReference>
<dbReference type="InterPro" id="IPR033113">
    <property type="entry name" value="PLipase_A2_His_AS"/>
</dbReference>
<dbReference type="PANTHER" id="PTHR11716">
    <property type="entry name" value="PHOSPHOLIPASE A2 FAMILY MEMBER"/>
    <property type="match status" value="1"/>
</dbReference>
<dbReference type="PANTHER" id="PTHR11716:SF9">
    <property type="entry name" value="PHOSPHOLIPASE A2, MEMBRANE ASSOCIATED"/>
    <property type="match status" value="1"/>
</dbReference>
<dbReference type="Pfam" id="PF00068">
    <property type="entry name" value="Phospholip_A2_1"/>
    <property type="match status" value="1"/>
</dbReference>
<dbReference type="PRINTS" id="PR00389">
    <property type="entry name" value="PHPHLIPASEA2"/>
</dbReference>
<dbReference type="SMART" id="SM00085">
    <property type="entry name" value="PA2c"/>
    <property type="match status" value="1"/>
</dbReference>
<dbReference type="SUPFAM" id="SSF48619">
    <property type="entry name" value="Phospholipase A2, PLA2"/>
    <property type="match status" value="1"/>
</dbReference>
<dbReference type="PROSITE" id="PS00119">
    <property type="entry name" value="PA2_ASP"/>
    <property type="match status" value="1"/>
</dbReference>
<dbReference type="PROSITE" id="PS00118">
    <property type="entry name" value="PA2_HIS"/>
    <property type="match status" value="1"/>
</dbReference>